<accession>Q9M5W4</accession>
<keyword id="KW-0158">Chromosome</keyword>
<keyword id="KW-0238">DNA-binding</keyword>
<keyword id="KW-0539">Nucleus</keyword>
<proteinExistence type="evidence at transcript level"/>
<comment type="function">
    <text>Histones H1 are necessary for the condensation of nucleosome chains into higher-order structures.</text>
</comment>
<comment type="subcellular location">
    <subcellularLocation>
        <location>Nucleus</location>
    </subcellularLocation>
    <subcellularLocation>
        <location>Chromosome</location>
    </subcellularLocation>
</comment>
<comment type="similarity">
    <text evidence="1">Belongs to the histone H1/H5 family.</text>
</comment>
<protein>
    <recommendedName>
        <fullName>Histone H1</fullName>
    </recommendedName>
</protein>
<organism>
    <name type="scientific">Euphorbia esula</name>
    <name type="common">Leafy spurge</name>
    <dbReference type="NCBI Taxonomy" id="3993"/>
    <lineage>
        <taxon>Eukaryota</taxon>
        <taxon>Viridiplantae</taxon>
        <taxon>Streptophyta</taxon>
        <taxon>Embryophyta</taxon>
        <taxon>Tracheophyta</taxon>
        <taxon>Spermatophyta</taxon>
        <taxon>Magnoliopsida</taxon>
        <taxon>eudicotyledons</taxon>
        <taxon>Gunneridae</taxon>
        <taxon>Pentapetalae</taxon>
        <taxon>rosids</taxon>
        <taxon>fabids</taxon>
        <taxon>Malpighiales</taxon>
        <taxon>Euphorbiaceae</taxon>
        <taxon>Euphorbioideae</taxon>
        <taxon>Euphorbieae</taxon>
        <taxon>Euphorbia</taxon>
        <taxon>Euphorbia subgen. Esula</taxon>
        <taxon>Euphorbia sect. Esula</taxon>
    </lineage>
</organism>
<reference key="1">
    <citation type="submission" date="2000-01" db="EMBL/GenBank/DDBJ databases">
        <title>Identification of mRNAs expressed in underground adventitious buds of Euphorbia esula (leafy spurge).</title>
        <authorList>
            <person name="Anderson J.V."/>
            <person name="Horvath D.P."/>
        </authorList>
    </citation>
    <scope>NUCLEOTIDE SEQUENCE [MRNA]</scope>
</reference>
<dbReference type="EMBL" id="AF222804">
    <property type="protein sequence ID" value="AAF27930.1"/>
    <property type="molecule type" value="mRNA"/>
</dbReference>
<dbReference type="SMR" id="Q9M5W4"/>
<dbReference type="GO" id="GO:0000786">
    <property type="term" value="C:nucleosome"/>
    <property type="evidence" value="ECO:0007669"/>
    <property type="project" value="InterPro"/>
</dbReference>
<dbReference type="GO" id="GO:0005634">
    <property type="term" value="C:nucleus"/>
    <property type="evidence" value="ECO:0007669"/>
    <property type="project" value="UniProtKB-SubCell"/>
</dbReference>
<dbReference type="GO" id="GO:0003690">
    <property type="term" value="F:double-stranded DNA binding"/>
    <property type="evidence" value="ECO:0007669"/>
    <property type="project" value="TreeGrafter"/>
</dbReference>
<dbReference type="GO" id="GO:0031492">
    <property type="term" value="F:nucleosomal DNA binding"/>
    <property type="evidence" value="ECO:0007669"/>
    <property type="project" value="TreeGrafter"/>
</dbReference>
<dbReference type="GO" id="GO:0030527">
    <property type="term" value="F:structural constituent of chromatin"/>
    <property type="evidence" value="ECO:0007669"/>
    <property type="project" value="InterPro"/>
</dbReference>
<dbReference type="GO" id="GO:0030261">
    <property type="term" value="P:chromosome condensation"/>
    <property type="evidence" value="ECO:0007669"/>
    <property type="project" value="TreeGrafter"/>
</dbReference>
<dbReference type="GO" id="GO:0045910">
    <property type="term" value="P:negative regulation of DNA recombination"/>
    <property type="evidence" value="ECO:0007669"/>
    <property type="project" value="TreeGrafter"/>
</dbReference>
<dbReference type="GO" id="GO:0006334">
    <property type="term" value="P:nucleosome assembly"/>
    <property type="evidence" value="ECO:0007669"/>
    <property type="project" value="InterPro"/>
</dbReference>
<dbReference type="CDD" id="cd00073">
    <property type="entry name" value="H15"/>
    <property type="match status" value="1"/>
</dbReference>
<dbReference type="FunFam" id="1.10.10.10:FF:000521">
    <property type="entry name" value="Histone H1"/>
    <property type="match status" value="1"/>
</dbReference>
<dbReference type="Gene3D" id="1.10.10.10">
    <property type="entry name" value="Winged helix-like DNA-binding domain superfamily/Winged helix DNA-binding domain"/>
    <property type="match status" value="1"/>
</dbReference>
<dbReference type="InterPro" id="IPR005819">
    <property type="entry name" value="H1/H5"/>
</dbReference>
<dbReference type="InterPro" id="IPR005818">
    <property type="entry name" value="Histone_H1/H5_H15"/>
</dbReference>
<dbReference type="InterPro" id="IPR036388">
    <property type="entry name" value="WH-like_DNA-bd_sf"/>
</dbReference>
<dbReference type="InterPro" id="IPR036390">
    <property type="entry name" value="WH_DNA-bd_sf"/>
</dbReference>
<dbReference type="PANTHER" id="PTHR11467">
    <property type="entry name" value="HISTONE H1"/>
    <property type="match status" value="1"/>
</dbReference>
<dbReference type="PANTHER" id="PTHR11467:SF131">
    <property type="entry name" value="HISTONE H1"/>
    <property type="match status" value="1"/>
</dbReference>
<dbReference type="Pfam" id="PF00538">
    <property type="entry name" value="Linker_histone"/>
    <property type="match status" value="1"/>
</dbReference>
<dbReference type="PRINTS" id="PR00624">
    <property type="entry name" value="HISTONEH5"/>
</dbReference>
<dbReference type="SMART" id="SM00526">
    <property type="entry name" value="H15"/>
    <property type="match status" value="1"/>
</dbReference>
<dbReference type="SUPFAM" id="SSF46785">
    <property type="entry name" value="Winged helix' DNA-binding domain"/>
    <property type="match status" value="1"/>
</dbReference>
<dbReference type="PROSITE" id="PS51504">
    <property type="entry name" value="H15"/>
    <property type="match status" value="1"/>
</dbReference>
<evidence type="ECO:0000255" key="1">
    <source>
        <dbReference type="PROSITE-ProRule" id="PRU00837"/>
    </source>
</evidence>
<evidence type="ECO:0000256" key="2">
    <source>
        <dbReference type="SAM" id="MobiDB-lite"/>
    </source>
</evidence>
<sequence length="229" mass="24210">MADTPVSAPVVPEVTERKSKRGTKAAAVKVPKEKKKVIAAKKPKSKGTSSHPSFFEMISDAISTLKERTGSSQYAINKFVEDKHKQLPSNFRKLLLFHLKKLVASGKLVKVKNSFKLPSARAAPAPALAKKPTIPKPKVAAKPKTAKIGAKPKAKAKVAAKTKATTKTVAKKIPAAKPKAKTAGKPKTVAAKPAKVAKTAAVASPGKKKAVPVKKVKTVKSPAGKRTRK</sequence>
<feature type="chain" id="PRO_0000195951" description="Histone H1">
    <location>
        <begin position="1"/>
        <end position="229"/>
    </location>
</feature>
<feature type="domain" description="H15" evidence="1">
    <location>
        <begin position="50"/>
        <end position="119"/>
    </location>
</feature>
<feature type="region of interest" description="Disordered" evidence="2">
    <location>
        <begin position="1"/>
        <end position="52"/>
    </location>
</feature>
<feature type="region of interest" description="Disordered" evidence="2">
    <location>
        <begin position="125"/>
        <end position="229"/>
    </location>
</feature>
<feature type="compositionally biased region" description="Basic residues" evidence="2">
    <location>
        <begin position="32"/>
        <end position="45"/>
    </location>
</feature>
<feature type="compositionally biased region" description="Low complexity" evidence="2">
    <location>
        <begin position="125"/>
        <end position="138"/>
    </location>
</feature>
<feature type="compositionally biased region" description="Basic residues" evidence="2">
    <location>
        <begin position="139"/>
        <end position="160"/>
    </location>
</feature>
<feature type="compositionally biased region" description="Low complexity" evidence="2">
    <location>
        <begin position="161"/>
        <end position="177"/>
    </location>
</feature>
<feature type="compositionally biased region" description="Low complexity" evidence="2">
    <location>
        <begin position="185"/>
        <end position="205"/>
    </location>
</feature>
<feature type="compositionally biased region" description="Basic residues" evidence="2">
    <location>
        <begin position="206"/>
        <end position="229"/>
    </location>
</feature>
<name>H1_EUPES</name>